<protein>
    <recommendedName>
        <fullName evidence="8">Thioredoxin-like protein CITRX, chloroplastic</fullName>
        <ecNumber evidence="8">1.8.-.-</ecNumber>
    </recommendedName>
    <alternativeName>
        <fullName evidence="7">Cf-9-interacting thioredoxin</fullName>
        <shortName evidence="7">LeCiTrx</shortName>
    </alternativeName>
</protein>
<organism>
    <name type="scientific">Solanum lycopersicum</name>
    <name type="common">Tomato</name>
    <name type="synonym">Lycopersicon esculentum</name>
    <dbReference type="NCBI Taxonomy" id="4081"/>
    <lineage>
        <taxon>Eukaryota</taxon>
        <taxon>Viridiplantae</taxon>
        <taxon>Streptophyta</taxon>
        <taxon>Embryophyta</taxon>
        <taxon>Tracheophyta</taxon>
        <taxon>Spermatophyta</taxon>
        <taxon>Magnoliopsida</taxon>
        <taxon>eudicotyledons</taxon>
        <taxon>Gunneridae</taxon>
        <taxon>Pentapetalae</taxon>
        <taxon>asterids</taxon>
        <taxon>lamiids</taxon>
        <taxon>Solanales</taxon>
        <taxon>Solanaceae</taxon>
        <taxon>Solanoideae</taxon>
        <taxon>Solaneae</taxon>
        <taxon>Solanum</taxon>
        <taxon>Solanum subgen. Lycopersicon</taxon>
    </lineage>
</organism>
<feature type="transit peptide" description="Chloroplast" evidence="3">
    <location>
        <begin position="1"/>
        <end position="64"/>
    </location>
</feature>
<feature type="chain" id="PRO_0000430874" description="Thioredoxin-like protein CITRX, chloroplastic">
    <location>
        <begin position="65"/>
        <end position="175"/>
    </location>
</feature>
<feature type="domain" description="Thioredoxin" evidence="4">
    <location>
        <begin position="74"/>
        <end position="175"/>
    </location>
</feature>
<feature type="active site" description="Nucleophile" evidence="1">
    <location>
        <position position="98"/>
    </location>
</feature>
<feature type="active site" description="Nucleophile" evidence="1">
    <location>
        <position position="101"/>
    </location>
</feature>
<feature type="site" description="Deprotonates C-terminal active site Cys" evidence="1">
    <location>
        <position position="92"/>
    </location>
</feature>
<feature type="site" description="Contributes to redox potential value" evidence="1">
    <location>
        <position position="99"/>
    </location>
</feature>
<feature type="site" description="Contributes to redox potential value" evidence="1">
    <location>
        <position position="100"/>
    </location>
</feature>
<feature type="disulfide bond" description="Redox-active" evidence="4">
    <location>
        <begin position="98"/>
        <end position="101"/>
    </location>
</feature>
<reference key="1">
    <citation type="submission" date="2000-04" db="EMBL/GenBank/DDBJ databases">
        <title>Molecular cloning of a putative thioredoxin gene in tomato.</title>
        <authorList>
            <person name="Min X."/>
            <person name="Kamiya Y."/>
        </authorList>
    </citation>
    <scope>NUCLEOTIDE SEQUENCE [MRNA]</scope>
    <source>
        <strain>cv. Moneymaker</strain>
        <tissue>Seedling</tissue>
    </source>
</reference>
<reference key="2">
    <citation type="journal article" date="2012" name="Nature">
        <title>The tomato genome sequence provides insights into fleshy fruit evolution.</title>
        <authorList>
            <consortium name="Tomato Genome Consortium"/>
        </authorList>
    </citation>
    <scope>NUCLEOTIDE SEQUENCE [LARGE SCALE GENOMIC DNA]</scope>
    <source>
        <strain>cv. Heinz 1706</strain>
    </source>
</reference>
<reference key="3">
    <citation type="journal article" date="2004" name="EMBO J.">
        <title>CITRX thioredoxin interacts with the tomato Cf-9 resistance protein and negatively regulates defence.</title>
        <authorList>
            <person name="Rivas S."/>
            <person name="Rougon-Cardoso A."/>
            <person name="Smoker M."/>
            <person name="Schauser L."/>
            <person name="Yoshioka H."/>
            <person name="Jones J.D."/>
        </authorList>
    </citation>
    <scope>DISRUPTION PHENOTYPE</scope>
    <scope>RETRACTED PAPER</scope>
</reference>
<reference key="4">
    <citation type="journal article" date="2019" name="EMBO J.">
        <authorList>
            <person name="Rivas S."/>
            <person name="Rougon-Cardoso A."/>
            <person name="Smoker M."/>
            <person name="Schauser L."/>
            <person name="Yoshioka H."/>
            <person name="Jones J.D."/>
        </authorList>
    </citation>
    <scope>RETRACTION NOTICE OF PUBMED:15131698</scope>
</reference>
<reference key="5">
    <citation type="journal article" date="2016" name="Mol. Plant Pathol.">
        <title>A mutational analysis of the cytosolic domain of the tomato Cf-9 disease-resistance protein shows that membrane-proximal residues are important for Avr9-dependent necrosis.</title>
        <authorList>
            <person name="Chakrabarti A."/>
            <person name="Velusamy T."/>
            <person name="Tee C.Y."/>
            <person name="Jones D.A."/>
        </authorList>
    </citation>
    <scope>INTERACTION WITH CF-9</scope>
</reference>
<name>CITRX_SOLLC</name>
<sequence>MQAASLAFHPPALRTSPSYLSSKLPHHLNYSLFKHAPSTSTLSLTQVLSRNTICKPPAVGKYVREDYLVKKLSAKEIQELIKGERNVPLIIDFYATWCGPCILMAQELEMLAVEYENNALIVKVDTDDEYEFARDMQVRGLPTLYFISPDSSKDAIRTEGLIPIQMMRDIIDNDL</sequence>
<accession>Q9LKW0</accession>
<keyword id="KW-0150">Chloroplast</keyword>
<keyword id="KW-1015">Disulfide bond</keyword>
<keyword id="KW-0249">Electron transport</keyword>
<keyword id="KW-0560">Oxidoreductase</keyword>
<keyword id="KW-0934">Plastid</keyword>
<keyword id="KW-0676">Redox-active center</keyword>
<keyword id="KW-1185">Reference proteome</keyword>
<keyword id="KW-0809">Transit peptide</keyword>
<keyword id="KW-0813">Transport</keyword>
<comment type="function">
    <text evidence="2">Probable thiol-disulfide oxidoreductase that may play a role in proper chloroplast development.</text>
</comment>
<comment type="subunit">
    <text evidence="6">Interacts with Cf-9 resistance protein.</text>
</comment>
<comment type="subcellular location">
    <subcellularLocation>
        <location evidence="3">Plastid</location>
        <location evidence="3">Chloroplast</location>
    </subcellularLocation>
</comment>
<comment type="disruption phenotype">
    <text evidence="5">Yellowish coloration in the leaves.</text>
</comment>
<comment type="similarity">
    <text evidence="8">Belongs to the thioredoxin family. Plant CITRX-type subfamily.</text>
</comment>
<comment type="caution">
    <text evidence="9">The article has been retracted, because it has become clear that the thioredoxin that interacts in yeast 2-hybrid with the Cf-9 C-terminus is in fact localized in the chloroplast, rendering a role in Cf-9 signaling unlikely. All the authors agree that this paper should be withdrawn from the scientific literature.</text>
</comment>
<proteinExistence type="evidence at protein level"/>
<dbReference type="EC" id="1.8.-.-" evidence="8"/>
<dbReference type="EMBL" id="AF261142">
    <property type="protein sequence ID" value="AAF75752.1"/>
    <property type="molecule type" value="mRNA"/>
</dbReference>
<dbReference type="RefSeq" id="NP_001234469.1">
    <property type="nucleotide sequence ID" value="NM_001247540.2"/>
</dbReference>
<dbReference type="SMR" id="Q9LKW0"/>
<dbReference type="FunCoup" id="Q9LKW0">
    <property type="interactions" value="530"/>
</dbReference>
<dbReference type="STRING" id="4081.Q9LKW0"/>
<dbReference type="PaxDb" id="4081-Solyc01g096480.2.1"/>
<dbReference type="EnsemblPlants" id="Solyc01g096475.1.1">
    <property type="protein sequence ID" value="Solyc01g096475.1.1"/>
    <property type="gene ID" value="Solyc01g096475.1"/>
</dbReference>
<dbReference type="GeneID" id="543657"/>
<dbReference type="Gramene" id="Solyc01g096475.1.1">
    <property type="protein sequence ID" value="Solyc01g096475.1.1"/>
    <property type="gene ID" value="Solyc01g096475.1"/>
</dbReference>
<dbReference type="KEGG" id="sly:543657"/>
<dbReference type="eggNOG" id="KOG0907">
    <property type="taxonomic scope" value="Eukaryota"/>
</dbReference>
<dbReference type="HOGENOM" id="CLU_110012_1_0_1"/>
<dbReference type="InParanoid" id="Q9LKW0"/>
<dbReference type="OMA" id="DEYEFAQ"/>
<dbReference type="OrthoDB" id="2121326at2759"/>
<dbReference type="PhylomeDB" id="Q9LKW0"/>
<dbReference type="Proteomes" id="UP000004994">
    <property type="component" value="Chromosome 1"/>
</dbReference>
<dbReference type="GO" id="GO:0009507">
    <property type="term" value="C:chloroplast"/>
    <property type="evidence" value="ECO:0007669"/>
    <property type="project" value="UniProtKB-SubCell"/>
</dbReference>
<dbReference type="GO" id="GO:0015036">
    <property type="term" value="F:disulfide oxidoreductase activity"/>
    <property type="evidence" value="ECO:0000318"/>
    <property type="project" value="GO_Central"/>
</dbReference>
<dbReference type="GO" id="GO:0015035">
    <property type="term" value="F:protein-disulfide reductase activity"/>
    <property type="evidence" value="ECO:0007669"/>
    <property type="project" value="InterPro"/>
</dbReference>
<dbReference type="GO" id="GO:0045454">
    <property type="term" value="P:cell redox homeostasis"/>
    <property type="evidence" value="ECO:0007669"/>
    <property type="project" value="InterPro"/>
</dbReference>
<dbReference type="GO" id="GO:0009657">
    <property type="term" value="P:plastid organization"/>
    <property type="evidence" value="ECO:0000318"/>
    <property type="project" value="GO_Central"/>
</dbReference>
<dbReference type="CDD" id="cd02947">
    <property type="entry name" value="TRX_family"/>
    <property type="match status" value="1"/>
</dbReference>
<dbReference type="FunFam" id="3.40.30.10:FF:000149">
    <property type="entry name" value="Thioredoxin-like protein CITRX, chloroplastic"/>
    <property type="match status" value="1"/>
</dbReference>
<dbReference type="Gene3D" id="3.40.30.10">
    <property type="entry name" value="Glutaredoxin"/>
    <property type="match status" value="1"/>
</dbReference>
<dbReference type="InterPro" id="IPR044182">
    <property type="entry name" value="CITRX"/>
</dbReference>
<dbReference type="InterPro" id="IPR036249">
    <property type="entry name" value="Thioredoxin-like_sf"/>
</dbReference>
<dbReference type="InterPro" id="IPR013766">
    <property type="entry name" value="Thioredoxin_domain"/>
</dbReference>
<dbReference type="PANTHER" id="PTHR47834">
    <property type="entry name" value="THIOREDOXIN-LIKE PROTEIN CITRX, CHLOROPLASTIC"/>
    <property type="match status" value="1"/>
</dbReference>
<dbReference type="PANTHER" id="PTHR47834:SF2">
    <property type="entry name" value="THIOREDOXIN-LIKE PROTEIN CITRX, CHLOROPLASTIC"/>
    <property type="match status" value="1"/>
</dbReference>
<dbReference type="Pfam" id="PF00085">
    <property type="entry name" value="Thioredoxin"/>
    <property type="match status" value="1"/>
</dbReference>
<dbReference type="PRINTS" id="PR00421">
    <property type="entry name" value="THIOREDOXIN"/>
</dbReference>
<dbReference type="SUPFAM" id="SSF52833">
    <property type="entry name" value="Thioredoxin-like"/>
    <property type="match status" value="1"/>
</dbReference>
<dbReference type="PROSITE" id="PS51352">
    <property type="entry name" value="THIOREDOXIN_2"/>
    <property type="match status" value="1"/>
</dbReference>
<evidence type="ECO:0000250" key="1">
    <source>
        <dbReference type="UniProtKB" id="P10599"/>
    </source>
</evidence>
<evidence type="ECO:0000250" key="2">
    <source>
        <dbReference type="UniProtKB" id="Q9M7X9"/>
    </source>
</evidence>
<evidence type="ECO:0000255" key="3"/>
<evidence type="ECO:0000255" key="4">
    <source>
        <dbReference type="PROSITE-ProRule" id="PRU00691"/>
    </source>
</evidence>
<evidence type="ECO:0000269" key="5">
    <source>
    </source>
</evidence>
<evidence type="ECO:0000269" key="6">
    <source>
    </source>
</evidence>
<evidence type="ECO:0000303" key="7">
    <source>
    </source>
</evidence>
<evidence type="ECO:0000305" key="8"/>
<evidence type="ECO:0000305" key="9">
    <source>
    </source>
</evidence>
<gene>
    <name evidence="7" type="primary">CITRX</name>
    <name type="ordered locus">Solyc01g096480</name>
    <name type="ORF">LOC543657</name>
</gene>